<feature type="chain" id="PRO_0000132737" description="Squamosa promoter-binding-like protein 16">
    <location>
        <begin position="1"/>
        <end position="988"/>
    </location>
</feature>
<feature type="zinc finger region" description="SBP-type" evidence="3">
    <location>
        <begin position="79"/>
        <end position="156"/>
    </location>
</feature>
<feature type="region of interest" description="Disordered" evidence="4">
    <location>
        <begin position="52"/>
        <end position="79"/>
    </location>
</feature>
<feature type="region of interest" description="Disordered" evidence="4">
    <location>
        <begin position="240"/>
        <end position="262"/>
    </location>
</feature>
<feature type="region of interest" description="Disordered" evidence="4">
    <location>
        <begin position="289"/>
        <end position="416"/>
    </location>
</feature>
<feature type="short sequence motif" description="Bipartite nuclear localization signal" evidence="2">
    <location>
        <begin position="139"/>
        <end position="155"/>
    </location>
</feature>
<feature type="compositionally biased region" description="Gly residues" evidence="4">
    <location>
        <begin position="69"/>
        <end position="78"/>
    </location>
</feature>
<feature type="compositionally biased region" description="Polar residues" evidence="4">
    <location>
        <begin position="250"/>
        <end position="262"/>
    </location>
</feature>
<feature type="compositionally biased region" description="Polar residues" evidence="4">
    <location>
        <begin position="301"/>
        <end position="311"/>
    </location>
</feature>
<feature type="compositionally biased region" description="Polar residues" evidence="4">
    <location>
        <begin position="327"/>
        <end position="358"/>
    </location>
</feature>
<feature type="compositionally biased region" description="Low complexity" evidence="4">
    <location>
        <begin position="368"/>
        <end position="379"/>
    </location>
</feature>
<feature type="binding site" evidence="3">
    <location>
        <position position="82"/>
    </location>
    <ligand>
        <name>Zn(2+)</name>
        <dbReference type="ChEBI" id="CHEBI:29105"/>
        <label>1</label>
    </ligand>
</feature>
<feature type="binding site" evidence="3">
    <location>
        <position position="87"/>
    </location>
    <ligand>
        <name>Zn(2+)</name>
        <dbReference type="ChEBI" id="CHEBI:29105"/>
        <label>1</label>
    </ligand>
</feature>
<feature type="binding site" evidence="3">
    <location>
        <position position="104"/>
    </location>
    <ligand>
        <name>Zn(2+)</name>
        <dbReference type="ChEBI" id="CHEBI:29105"/>
        <label>1</label>
    </ligand>
</feature>
<feature type="binding site" evidence="3">
    <location>
        <position position="107"/>
    </location>
    <ligand>
        <name>Zn(2+)</name>
        <dbReference type="ChEBI" id="CHEBI:29105"/>
        <label>1</label>
    </ligand>
</feature>
<feature type="binding site" evidence="3">
    <location>
        <position position="123"/>
    </location>
    <ligand>
        <name>Zn(2+)</name>
        <dbReference type="ChEBI" id="CHEBI:29105"/>
        <label>2</label>
    </ligand>
</feature>
<feature type="binding site" evidence="3">
    <location>
        <position position="126"/>
    </location>
    <ligand>
        <name>Zn(2+)</name>
        <dbReference type="ChEBI" id="CHEBI:29105"/>
        <label>2</label>
    </ligand>
</feature>
<feature type="binding site" evidence="3">
    <location>
        <position position="130"/>
    </location>
    <ligand>
        <name>Zn(2+)</name>
        <dbReference type="ChEBI" id="CHEBI:29105"/>
        <label>2</label>
    </ligand>
</feature>
<feature type="binding site" evidence="3">
    <location>
        <position position="142"/>
    </location>
    <ligand>
        <name>Zn(2+)</name>
        <dbReference type="ChEBI" id="CHEBI:29105"/>
        <label>2</label>
    </ligand>
</feature>
<feature type="splice variant" id="VSP_013986" description="In isoform 2." evidence="5">
    <location>
        <begin position="1"/>
        <end position="179"/>
    </location>
</feature>
<feature type="splice variant" id="VSP_013987" description="In isoform 2." evidence="5">
    <original>LENGLRGD</original>
    <variation>PMPRFAKS</variation>
    <location>
        <begin position="660"/>
        <end position="667"/>
    </location>
</feature>
<feature type="splice variant" id="VSP_013988" description="In isoform 2." evidence="5">
    <location>
        <begin position="668"/>
        <end position="988"/>
    </location>
</feature>
<name>SPL16_ARATH</name>
<sequence>MGELPKDDWQMNRWKWDGQRFEAIELQGESLQLSNKKGLDLNLPCGFNDVEGTPVDLTRPSKKVRSGSPGSGGGGGGNYPKCQVDNCKEDLSIAKDYHRRHKVCEVHSKATKALVGKQMQRFCQQCSRFHLLSEFDEGKRSCRRRLDGHNRRRRKTQPDAITSQVVALENRDNTSNNTNMDVMALLTALVCAQGRNEATTNGSPGVPQREQLLQILNKIKALPLPMNLTSKLNNIGILARKNPEQPSPMNPQNSMNGASSPSTMDLLAALSASLGSSAPEAIAFLSQGGFGNKESNDRTKLTSSDHSATTSLEKKTLEFPSFGGGERTSSTNHSPSQYSDSRGQDTRSSLSLQLFTSSPEEESRPKVASSTKYYSSASSNPVEDRSPSSSPVMQELFPLHTSPETRRYNNYKDTSTSPRTSCLPLELFGASNRGATANPNYNVLRHQSGYASSGSDYSPPSLNSNAQERTGKISFKLFEKDPSQLPNTLRTEIFRWLSSFPSDMESFIRPGCVILSVYVAMSASAWEQLEENLLQRVRSLVQDSEFWSNSRFLVNAGRQLASHKHGRIRLSKSWRTLNLPELITVSPLAVVAGEETALIVRGRNLTNDGMRLRCAHMGNYASMEVTGREHRLTKVDELNVSSFQVQSASSVSLGRCFIELENGLRGDNFPLIIANATICKELNRLEEEFHPKDVIEEQIQNLDRPRSREEVLCFLNELGWLFQRKWTSDIHGEPDFSLPRFKFLLVCSVERDYCSLIRTVLDMMVERNLGKDGLLNKESLDMLADIQLLNRAIKRRNTKMAETLIHYSVNPSTRNFIFLPSIAGPGDITPLHLAASTSSSDDMIDALTNDPQEIGLSCWNTLVDATGQTPFSYAAMRDNHSYNTLVARKLADKRNGQISLNIENGIDQIGLSKRLSSELKRSCNTCASVALKYQRKVSGSRRLFPTPIIHSMLAVATVCVCVCVFMHAFPMVRQGSHFSWGGLDYGSI</sequence>
<protein>
    <recommendedName>
        <fullName>Squamosa promoter-binding-like protein 16</fullName>
    </recommendedName>
    <alternativeName>
        <fullName>SPL1-related protein 3</fullName>
    </alternativeName>
</protein>
<evidence type="ECO:0000250" key="1"/>
<evidence type="ECO:0000255" key="2"/>
<evidence type="ECO:0000255" key="3">
    <source>
        <dbReference type="PROSITE-ProRule" id="PRU00470"/>
    </source>
</evidence>
<evidence type="ECO:0000256" key="4">
    <source>
        <dbReference type="SAM" id="MobiDB-lite"/>
    </source>
</evidence>
<evidence type="ECO:0000303" key="5">
    <source>
    </source>
</evidence>
<evidence type="ECO:0000305" key="6"/>
<comment type="function">
    <text evidence="1">Trans-acting factor that binds specifically to the consensus nucleotide sequence 5'-TNCGTACAA-3'.</text>
</comment>
<comment type="cofactor">
    <cofactor evidence="1">
        <name>Zn(2+)</name>
        <dbReference type="ChEBI" id="CHEBI:29105"/>
    </cofactor>
    <text evidence="1">Binds 2 Zn(2+) ions per subunit.</text>
</comment>
<comment type="subcellular location">
    <subcellularLocation>
        <location evidence="6">Nucleus</location>
    </subcellularLocation>
</comment>
<comment type="alternative products">
    <event type="alternative splicing"/>
    <isoform>
        <id>Q700C2-1</id>
        <name>1</name>
        <sequence type="displayed"/>
    </isoform>
    <isoform>
        <id>Q700C2-2</id>
        <name>2</name>
        <sequence type="described" ref="VSP_013986 VSP_013987 VSP_013988"/>
    </isoform>
</comment>
<comment type="miscellaneous">
    <molecule>Isoform 1</molecule>
    <text>May be due to a competing acceptor splice site.</text>
</comment>
<comment type="miscellaneous">
    <molecule>Isoform 2</molecule>
    <text evidence="6">May be due to a competing acceptor splice site.</text>
</comment>
<comment type="sequence caution" evidence="6">
    <conflict type="erroneous gene model prediction">
        <sequence resource="EMBL-CDS" id="AAG51947"/>
    </conflict>
</comment>
<dbReference type="EMBL" id="AC015450">
    <property type="protein sequence ID" value="AAG51947.1"/>
    <property type="status" value="ALT_SEQ"/>
    <property type="molecule type" value="Genomic_DNA"/>
</dbReference>
<dbReference type="EMBL" id="CP002684">
    <property type="status" value="NOT_ANNOTATED_CDS"/>
    <property type="molecule type" value="Genomic_DNA"/>
</dbReference>
<dbReference type="EMBL" id="AY062670">
    <property type="protein sequence ID" value="AAL32748.1"/>
    <property type="molecule type" value="mRNA"/>
</dbReference>
<dbReference type="EMBL" id="BT006626">
    <property type="protein sequence ID" value="AAP31970.1"/>
    <property type="molecule type" value="mRNA"/>
</dbReference>
<dbReference type="EMBL" id="AJ630503">
    <property type="protein sequence ID" value="CAG25876.1"/>
    <property type="molecule type" value="mRNA"/>
</dbReference>
<dbReference type="EMBL" id="AY568676">
    <property type="protein sequence ID" value="AAS79566.1"/>
    <property type="molecule type" value="mRNA"/>
</dbReference>
<dbReference type="EMBL" id="AJ242958">
    <property type="protein sequence ID" value="CAB56771.1"/>
    <property type="molecule type" value="mRNA"/>
</dbReference>
<dbReference type="PIR" id="H96793">
    <property type="entry name" value="H96793"/>
</dbReference>
<dbReference type="PIR" id="T52568">
    <property type="entry name" value="T52568"/>
</dbReference>
<dbReference type="STRING" id="3702.Q700C2"/>
<dbReference type="iPTMnet" id="Q700C2"/>
<dbReference type="PaxDb" id="3702-AT1G76580.1"/>
<dbReference type="Araport" id="AT1G76580"/>
<dbReference type="TAIR" id="AT1G76580"/>
<dbReference type="eggNOG" id="ENOG502QS71">
    <property type="taxonomic scope" value="Eukaryota"/>
</dbReference>
<dbReference type="HOGENOM" id="CLU_006255_3_0_1"/>
<dbReference type="InParanoid" id="Q700C2"/>
<dbReference type="PhylomeDB" id="Q700C2"/>
<dbReference type="PRO" id="PR:Q700C2"/>
<dbReference type="Proteomes" id="UP000006548">
    <property type="component" value="Chromosome 1"/>
</dbReference>
<dbReference type="ExpressionAtlas" id="Q700C2">
    <property type="expression patterns" value="baseline and differential"/>
</dbReference>
<dbReference type="GO" id="GO:0005634">
    <property type="term" value="C:nucleus"/>
    <property type="evidence" value="ECO:0007669"/>
    <property type="project" value="UniProtKB-SubCell"/>
</dbReference>
<dbReference type="GO" id="GO:0003700">
    <property type="term" value="F:DNA-binding transcription factor activity"/>
    <property type="evidence" value="ECO:0000250"/>
    <property type="project" value="TAIR"/>
</dbReference>
<dbReference type="GO" id="GO:0000976">
    <property type="term" value="F:transcription cis-regulatory region binding"/>
    <property type="evidence" value="ECO:0000353"/>
    <property type="project" value="TAIR"/>
</dbReference>
<dbReference type="GO" id="GO:0008270">
    <property type="term" value="F:zinc ion binding"/>
    <property type="evidence" value="ECO:0007669"/>
    <property type="project" value="UniProtKB-KW"/>
</dbReference>
<dbReference type="GO" id="GO:0006355">
    <property type="term" value="P:regulation of DNA-templated transcription"/>
    <property type="evidence" value="ECO:0000304"/>
    <property type="project" value="TAIR"/>
</dbReference>
<dbReference type="FunFam" id="1.25.40.20:FF:000633">
    <property type="entry name" value="Squamosa promoter-binding-like protein 14"/>
    <property type="match status" value="1"/>
</dbReference>
<dbReference type="FunFam" id="4.10.1100.10:FF:000001">
    <property type="entry name" value="Squamosa promoter-binding-like protein 14"/>
    <property type="match status" value="1"/>
</dbReference>
<dbReference type="Gene3D" id="1.25.40.20">
    <property type="entry name" value="Ankyrin repeat-containing domain"/>
    <property type="match status" value="1"/>
</dbReference>
<dbReference type="Gene3D" id="4.10.1100.10">
    <property type="entry name" value="Transcription factor, SBP-box domain"/>
    <property type="match status" value="1"/>
</dbReference>
<dbReference type="InterPro" id="IPR036770">
    <property type="entry name" value="Ankyrin_rpt-contain_sf"/>
</dbReference>
<dbReference type="InterPro" id="IPR044817">
    <property type="entry name" value="SBP-like"/>
</dbReference>
<dbReference type="InterPro" id="IPR004333">
    <property type="entry name" value="SBP_dom"/>
</dbReference>
<dbReference type="InterPro" id="IPR036893">
    <property type="entry name" value="SBP_sf"/>
</dbReference>
<dbReference type="PANTHER" id="PTHR31251:SF197">
    <property type="entry name" value="SQUAMOSA PROMOTER-BINDING-LIKE PROTEIN 16"/>
    <property type="match status" value="1"/>
</dbReference>
<dbReference type="PANTHER" id="PTHR31251">
    <property type="entry name" value="SQUAMOSA PROMOTER-BINDING-LIKE PROTEIN 4"/>
    <property type="match status" value="1"/>
</dbReference>
<dbReference type="Pfam" id="PF03110">
    <property type="entry name" value="SBP"/>
    <property type="match status" value="1"/>
</dbReference>
<dbReference type="SUPFAM" id="SSF48403">
    <property type="entry name" value="Ankyrin repeat"/>
    <property type="match status" value="1"/>
</dbReference>
<dbReference type="SUPFAM" id="SSF103612">
    <property type="entry name" value="SBT domain"/>
    <property type="match status" value="1"/>
</dbReference>
<dbReference type="PROSITE" id="PS51141">
    <property type="entry name" value="ZF_SBP"/>
    <property type="match status" value="1"/>
</dbReference>
<accession>Q700C2</accession>
<accession>Q8W4C0</accession>
<accession>Q9C9K0</accession>
<accession>Q9SMW9</accession>
<keyword id="KW-0025">Alternative splicing</keyword>
<keyword id="KW-0238">DNA-binding</keyword>
<keyword id="KW-0479">Metal-binding</keyword>
<keyword id="KW-0539">Nucleus</keyword>
<keyword id="KW-1185">Reference proteome</keyword>
<keyword id="KW-0804">Transcription</keyword>
<keyword id="KW-0805">Transcription regulation</keyword>
<keyword id="KW-0862">Zinc</keyword>
<keyword id="KW-0863">Zinc-finger</keyword>
<reference key="1">
    <citation type="journal article" date="2000" name="Nature">
        <title>Sequence and analysis of chromosome 1 of the plant Arabidopsis thaliana.</title>
        <authorList>
            <person name="Theologis A."/>
            <person name="Ecker J.R."/>
            <person name="Palm C.J."/>
            <person name="Federspiel N.A."/>
            <person name="Kaul S."/>
            <person name="White O."/>
            <person name="Alonso J."/>
            <person name="Altafi H."/>
            <person name="Araujo R."/>
            <person name="Bowman C.L."/>
            <person name="Brooks S.Y."/>
            <person name="Buehler E."/>
            <person name="Chan A."/>
            <person name="Chao Q."/>
            <person name="Chen H."/>
            <person name="Cheuk R.F."/>
            <person name="Chin C.W."/>
            <person name="Chung M.K."/>
            <person name="Conn L."/>
            <person name="Conway A.B."/>
            <person name="Conway A.R."/>
            <person name="Creasy T.H."/>
            <person name="Dewar K."/>
            <person name="Dunn P."/>
            <person name="Etgu P."/>
            <person name="Feldblyum T.V."/>
            <person name="Feng J.-D."/>
            <person name="Fong B."/>
            <person name="Fujii C.Y."/>
            <person name="Gill J.E."/>
            <person name="Goldsmith A.D."/>
            <person name="Haas B."/>
            <person name="Hansen N.F."/>
            <person name="Hughes B."/>
            <person name="Huizar L."/>
            <person name="Hunter J.L."/>
            <person name="Jenkins J."/>
            <person name="Johnson-Hopson C."/>
            <person name="Khan S."/>
            <person name="Khaykin E."/>
            <person name="Kim C.J."/>
            <person name="Koo H.L."/>
            <person name="Kremenetskaia I."/>
            <person name="Kurtz D.B."/>
            <person name="Kwan A."/>
            <person name="Lam B."/>
            <person name="Langin-Hooper S."/>
            <person name="Lee A."/>
            <person name="Lee J.M."/>
            <person name="Lenz C.A."/>
            <person name="Li J.H."/>
            <person name="Li Y.-P."/>
            <person name="Lin X."/>
            <person name="Liu S.X."/>
            <person name="Liu Z.A."/>
            <person name="Luros J.S."/>
            <person name="Maiti R."/>
            <person name="Marziali A."/>
            <person name="Militscher J."/>
            <person name="Miranda M."/>
            <person name="Nguyen M."/>
            <person name="Nierman W.C."/>
            <person name="Osborne B.I."/>
            <person name="Pai G."/>
            <person name="Peterson J."/>
            <person name="Pham P.K."/>
            <person name="Rizzo M."/>
            <person name="Rooney T."/>
            <person name="Rowley D."/>
            <person name="Sakano H."/>
            <person name="Salzberg S.L."/>
            <person name="Schwartz J.R."/>
            <person name="Shinn P."/>
            <person name="Southwick A.M."/>
            <person name="Sun H."/>
            <person name="Tallon L.J."/>
            <person name="Tambunga G."/>
            <person name="Toriumi M.J."/>
            <person name="Town C.D."/>
            <person name="Utterback T."/>
            <person name="Van Aken S."/>
            <person name="Vaysberg M."/>
            <person name="Vysotskaia V.S."/>
            <person name="Walker M."/>
            <person name="Wu D."/>
            <person name="Yu G."/>
            <person name="Fraser C.M."/>
            <person name="Venter J.C."/>
            <person name="Davis R.W."/>
        </authorList>
    </citation>
    <scope>NUCLEOTIDE SEQUENCE [LARGE SCALE GENOMIC DNA]</scope>
    <source>
        <strain>cv. Columbia</strain>
    </source>
</reference>
<reference key="2">
    <citation type="journal article" date="2017" name="Plant J.">
        <title>Araport11: a complete reannotation of the Arabidopsis thaliana reference genome.</title>
        <authorList>
            <person name="Cheng C.Y."/>
            <person name="Krishnakumar V."/>
            <person name="Chan A.P."/>
            <person name="Thibaud-Nissen F."/>
            <person name="Schobel S."/>
            <person name="Town C.D."/>
        </authorList>
    </citation>
    <scope>GENOME REANNOTATION</scope>
    <source>
        <strain>cv. Columbia</strain>
    </source>
</reference>
<reference key="3">
    <citation type="journal article" date="2003" name="Science">
        <title>Empirical analysis of transcriptional activity in the Arabidopsis genome.</title>
        <authorList>
            <person name="Yamada K."/>
            <person name="Lim J."/>
            <person name="Dale J.M."/>
            <person name="Chen H."/>
            <person name="Shinn P."/>
            <person name="Palm C.J."/>
            <person name="Southwick A.M."/>
            <person name="Wu H.C."/>
            <person name="Kim C.J."/>
            <person name="Nguyen M."/>
            <person name="Pham P.K."/>
            <person name="Cheuk R.F."/>
            <person name="Karlin-Newmann G."/>
            <person name="Liu S.X."/>
            <person name="Lam B."/>
            <person name="Sakano H."/>
            <person name="Wu T."/>
            <person name="Yu G."/>
            <person name="Miranda M."/>
            <person name="Quach H.L."/>
            <person name="Tripp M."/>
            <person name="Chang C.H."/>
            <person name="Lee J.M."/>
            <person name="Toriumi M.J."/>
            <person name="Chan M.M."/>
            <person name="Tang C.C."/>
            <person name="Onodera C.S."/>
            <person name="Deng J.M."/>
            <person name="Akiyama K."/>
            <person name="Ansari Y."/>
            <person name="Arakawa T."/>
            <person name="Banh J."/>
            <person name="Banno F."/>
            <person name="Bowser L."/>
            <person name="Brooks S.Y."/>
            <person name="Carninci P."/>
            <person name="Chao Q."/>
            <person name="Choy N."/>
            <person name="Enju A."/>
            <person name="Goldsmith A.D."/>
            <person name="Gurjal M."/>
            <person name="Hansen N.F."/>
            <person name="Hayashizaki Y."/>
            <person name="Johnson-Hopson C."/>
            <person name="Hsuan V.W."/>
            <person name="Iida K."/>
            <person name="Karnes M."/>
            <person name="Khan S."/>
            <person name="Koesema E."/>
            <person name="Ishida J."/>
            <person name="Jiang P.X."/>
            <person name="Jones T."/>
            <person name="Kawai J."/>
            <person name="Kamiya A."/>
            <person name="Meyers C."/>
            <person name="Nakajima M."/>
            <person name="Narusaka M."/>
            <person name="Seki M."/>
            <person name="Sakurai T."/>
            <person name="Satou M."/>
            <person name="Tamse R."/>
            <person name="Vaysberg M."/>
            <person name="Wallender E.K."/>
            <person name="Wong C."/>
            <person name="Yamamura Y."/>
            <person name="Yuan S."/>
            <person name="Shinozaki K."/>
            <person name="Davis R.W."/>
            <person name="Theologis A."/>
            <person name="Ecker J.R."/>
        </authorList>
    </citation>
    <scope>NUCLEOTIDE SEQUENCE [LARGE SCALE MRNA] (ISOFORM 2)</scope>
    <source>
        <strain>cv. Columbia</strain>
    </source>
</reference>
<reference key="4">
    <citation type="journal article" date="2004" name="Plant Physiol.">
        <title>Genome-wide ORFeome cloning and analysis of Arabidopsis transcription factor genes.</title>
        <authorList>
            <person name="Gong W."/>
            <person name="Shen Y.-P."/>
            <person name="Ma L.-G."/>
            <person name="Pan Y."/>
            <person name="Du Y.-L."/>
            <person name="Wang D.-H."/>
            <person name="Yang J.-Y."/>
            <person name="Hu L.-D."/>
            <person name="Liu X.-F."/>
            <person name="Dong C.-X."/>
            <person name="Ma L."/>
            <person name="Chen Y.-H."/>
            <person name="Yang X.-Y."/>
            <person name="Gao Y."/>
            <person name="Zhu D."/>
            <person name="Tan X."/>
            <person name="Mu J.-Y."/>
            <person name="Zhang D.-B."/>
            <person name="Liu Y.-L."/>
            <person name="Dinesh-Kumar S.P."/>
            <person name="Li Y."/>
            <person name="Wang X.-P."/>
            <person name="Gu H.-Y."/>
            <person name="Qu L.-J."/>
            <person name="Bai S.-N."/>
            <person name="Lu Y.-T."/>
            <person name="Li J.-Y."/>
            <person name="Zhao J.-D."/>
            <person name="Zuo J."/>
            <person name="Huang H."/>
            <person name="Deng X.-W."/>
            <person name="Zhu Y.-X."/>
        </authorList>
    </citation>
    <scope>NUCLEOTIDE SEQUENCE [LARGE SCALE MRNA] OF 180-682 (ISOFORM 1)</scope>
    <source>
        <strain>cv. Columbia</strain>
    </source>
</reference>
<reference key="5">
    <citation type="journal article" date="1999" name="Gene">
        <title>Molecular characterization of the Arabidopsis SBP-box genes.</title>
        <authorList>
            <person name="Cardon G.H."/>
            <person name="Hoehmann S."/>
            <person name="Klein J."/>
            <person name="Nettesheim K."/>
            <person name="Saedler H."/>
            <person name="Huijser P."/>
        </authorList>
    </citation>
    <scope>NUCLEOTIDE SEQUENCE [MRNA] OF 342-988 (ISOFORM 1)</scope>
    <source>
        <strain>cv. Columbia</strain>
        <tissue>Flower</tissue>
    </source>
</reference>
<proteinExistence type="evidence at transcript level"/>
<gene>
    <name type="primary">SPL16</name>
    <name type="synonym">SPL1R3</name>
    <name type="ordered locus">At1g76580</name>
    <name type="ORF">F14G6.18</name>
</gene>
<organism>
    <name type="scientific">Arabidopsis thaliana</name>
    <name type="common">Mouse-ear cress</name>
    <dbReference type="NCBI Taxonomy" id="3702"/>
    <lineage>
        <taxon>Eukaryota</taxon>
        <taxon>Viridiplantae</taxon>
        <taxon>Streptophyta</taxon>
        <taxon>Embryophyta</taxon>
        <taxon>Tracheophyta</taxon>
        <taxon>Spermatophyta</taxon>
        <taxon>Magnoliopsida</taxon>
        <taxon>eudicotyledons</taxon>
        <taxon>Gunneridae</taxon>
        <taxon>Pentapetalae</taxon>
        <taxon>rosids</taxon>
        <taxon>malvids</taxon>
        <taxon>Brassicales</taxon>
        <taxon>Brassicaceae</taxon>
        <taxon>Camelineae</taxon>
        <taxon>Arabidopsis</taxon>
    </lineage>
</organism>